<protein>
    <recommendedName>
        <fullName evidence="1">Phenylalanine--tRNA ligase beta subunit</fullName>
        <ecNumber evidence="1">6.1.1.20</ecNumber>
    </recommendedName>
    <alternativeName>
        <fullName evidence="1">Phenylalanyl-tRNA synthetase beta subunit</fullName>
        <shortName evidence="1">PheRS</shortName>
    </alternativeName>
</protein>
<dbReference type="EC" id="6.1.1.20" evidence="1"/>
<dbReference type="EMBL" id="CP000477">
    <property type="protein sequence ID" value="ABK15267.1"/>
    <property type="molecule type" value="Genomic_DNA"/>
</dbReference>
<dbReference type="RefSeq" id="WP_011696659.1">
    <property type="nucleotide sequence ID" value="NC_008553.1"/>
</dbReference>
<dbReference type="SMR" id="A0B993"/>
<dbReference type="STRING" id="349307.Mthe_1495"/>
<dbReference type="GeneID" id="4462217"/>
<dbReference type="KEGG" id="mtp:Mthe_1495"/>
<dbReference type="HOGENOM" id="CLU_020279_3_0_2"/>
<dbReference type="OrthoDB" id="10073at2157"/>
<dbReference type="Proteomes" id="UP000000674">
    <property type="component" value="Chromosome"/>
</dbReference>
<dbReference type="GO" id="GO:0009328">
    <property type="term" value="C:phenylalanine-tRNA ligase complex"/>
    <property type="evidence" value="ECO:0007669"/>
    <property type="project" value="TreeGrafter"/>
</dbReference>
<dbReference type="GO" id="GO:0005524">
    <property type="term" value="F:ATP binding"/>
    <property type="evidence" value="ECO:0007669"/>
    <property type="project" value="UniProtKB-UniRule"/>
</dbReference>
<dbReference type="GO" id="GO:0000287">
    <property type="term" value="F:magnesium ion binding"/>
    <property type="evidence" value="ECO:0007669"/>
    <property type="project" value="InterPro"/>
</dbReference>
<dbReference type="GO" id="GO:0004826">
    <property type="term" value="F:phenylalanine-tRNA ligase activity"/>
    <property type="evidence" value="ECO:0007669"/>
    <property type="project" value="UniProtKB-UniRule"/>
</dbReference>
<dbReference type="GO" id="GO:0003723">
    <property type="term" value="F:RNA binding"/>
    <property type="evidence" value="ECO:0007669"/>
    <property type="project" value="InterPro"/>
</dbReference>
<dbReference type="GO" id="GO:0006432">
    <property type="term" value="P:phenylalanyl-tRNA aminoacylation"/>
    <property type="evidence" value="ECO:0007669"/>
    <property type="project" value="UniProtKB-UniRule"/>
</dbReference>
<dbReference type="CDD" id="cd00769">
    <property type="entry name" value="PheRS_beta_core"/>
    <property type="match status" value="1"/>
</dbReference>
<dbReference type="FunFam" id="3.50.40.10:FF:000003">
    <property type="entry name" value="Phenylalanine--tRNA ligase beta subunit"/>
    <property type="match status" value="1"/>
</dbReference>
<dbReference type="Gene3D" id="3.30.56.10">
    <property type="match status" value="2"/>
</dbReference>
<dbReference type="Gene3D" id="3.30.930.10">
    <property type="entry name" value="Bira Bifunctional Protein, Domain 2"/>
    <property type="match status" value="1"/>
</dbReference>
<dbReference type="Gene3D" id="3.50.40.10">
    <property type="entry name" value="Phenylalanyl-trna Synthetase, Chain B, domain 3"/>
    <property type="match status" value="1"/>
</dbReference>
<dbReference type="HAMAP" id="MF_00284">
    <property type="entry name" value="Phe_tRNA_synth_beta2"/>
    <property type="match status" value="1"/>
</dbReference>
<dbReference type="InterPro" id="IPR045864">
    <property type="entry name" value="aa-tRNA-synth_II/BPL/LPL"/>
</dbReference>
<dbReference type="InterPro" id="IPR005146">
    <property type="entry name" value="B3/B4_tRNA-bd"/>
</dbReference>
<dbReference type="InterPro" id="IPR009061">
    <property type="entry name" value="DNA-bd_dom_put_sf"/>
</dbReference>
<dbReference type="InterPro" id="IPR045060">
    <property type="entry name" value="Phe-tRNA-ligase_IIc_bsu"/>
</dbReference>
<dbReference type="InterPro" id="IPR004531">
    <property type="entry name" value="Phe-tRNA-synth_IIc_bsu_arc_euk"/>
</dbReference>
<dbReference type="InterPro" id="IPR020825">
    <property type="entry name" value="Phe-tRNA_synthase-like_B3/B4"/>
</dbReference>
<dbReference type="InterPro" id="IPR022918">
    <property type="entry name" value="Phe_tRNA_ligase_beta2_arc"/>
</dbReference>
<dbReference type="InterPro" id="IPR041616">
    <property type="entry name" value="PheRS_beta_core"/>
</dbReference>
<dbReference type="InterPro" id="IPR005147">
    <property type="entry name" value="tRNA_synthase_B5-dom"/>
</dbReference>
<dbReference type="NCBIfam" id="TIGR00471">
    <property type="entry name" value="pheT_arch"/>
    <property type="match status" value="1"/>
</dbReference>
<dbReference type="PANTHER" id="PTHR10947:SF0">
    <property type="entry name" value="PHENYLALANINE--TRNA LIGASE BETA SUBUNIT"/>
    <property type="match status" value="1"/>
</dbReference>
<dbReference type="PANTHER" id="PTHR10947">
    <property type="entry name" value="PHENYLALANYL-TRNA SYNTHETASE BETA CHAIN AND LEUCINE-RICH REPEAT-CONTAINING PROTEIN 47"/>
    <property type="match status" value="1"/>
</dbReference>
<dbReference type="Pfam" id="PF03484">
    <property type="entry name" value="B5"/>
    <property type="match status" value="1"/>
</dbReference>
<dbReference type="Pfam" id="PF17759">
    <property type="entry name" value="tRNA_synthFbeta"/>
    <property type="match status" value="1"/>
</dbReference>
<dbReference type="SMART" id="SM00873">
    <property type="entry name" value="B3_4"/>
    <property type="match status" value="1"/>
</dbReference>
<dbReference type="SMART" id="SM00874">
    <property type="entry name" value="B5"/>
    <property type="match status" value="1"/>
</dbReference>
<dbReference type="SUPFAM" id="SSF55681">
    <property type="entry name" value="Class II aaRS and biotin synthetases"/>
    <property type="match status" value="1"/>
</dbReference>
<dbReference type="SUPFAM" id="SSF46955">
    <property type="entry name" value="Putative DNA-binding domain"/>
    <property type="match status" value="2"/>
</dbReference>
<dbReference type="PROSITE" id="PS51483">
    <property type="entry name" value="B5"/>
    <property type="match status" value="1"/>
</dbReference>
<comment type="catalytic activity">
    <reaction evidence="1">
        <text>tRNA(Phe) + L-phenylalanine + ATP = L-phenylalanyl-tRNA(Phe) + AMP + diphosphate + H(+)</text>
        <dbReference type="Rhea" id="RHEA:19413"/>
        <dbReference type="Rhea" id="RHEA-COMP:9668"/>
        <dbReference type="Rhea" id="RHEA-COMP:9699"/>
        <dbReference type="ChEBI" id="CHEBI:15378"/>
        <dbReference type="ChEBI" id="CHEBI:30616"/>
        <dbReference type="ChEBI" id="CHEBI:33019"/>
        <dbReference type="ChEBI" id="CHEBI:58095"/>
        <dbReference type="ChEBI" id="CHEBI:78442"/>
        <dbReference type="ChEBI" id="CHEBI:78531"/>
        <dbReference type="ChEBI" id="CHEBI:456215"/>
        <dbReference type="EC" id="6.1.1.20"/>
    </reaction>
</comment>
<comment type="cofactor">
    <cofactor evidence="1">
        <name>Mg(2+)</name>
        <dbReference type="ChEBI" id="CHEBI:18420"/>
    </cofactor>
</comment>
<comment type="subunit">
    <text evidence="1">Tetramer of two alpha and two beta subunits.</text>
</comment>
<comment type="subcellular location">
    <subcellularLocation>
        <location evidence="1">Cytoplasm</location>
    </subcellularLocation>
</comment>
<comment type="similarity">
    <text evidence="1">Belongs to the phenylalanyl-tRNA synthetase beta subunit family. Type 2 subfamily.</text>
</comment>
<keyword id="KW-0030">Aminoacyl-tRNA synthetase</keyword>
<keyword id="KW-0067">ATP-binding</keyword>
<keyword id="KW-0963">Cytoplasm</keyword>
<keyword id="KW-0436">Ligase</keyword>
<keyword id="KW-0460">Magnesium</keyword>
<keyword id="KW-0479">Metal-binding</keyword>
<keyword id="KW-0547">Nucleotide-binding</keyword>
<keyword id="KW-0648">Protein biosynthesis</keyword>
<keyword id="KW-1185">Reference proteome</keyword>
<name>SYFB_METTP</name>
<reference key="1">
    <citation type="submission" date="2006-10" db="EMBL/GenBank/DDBJ databases">
        <title>Complete sequence of Methanosaeta thermophila PT.</title>
        <authorList>
            <consortium name="US DOE Joint Genome Institute"/>
            <person name="Copeland A."/>
            <person name="Lucas S."/>
            <person name="Lapidus A."/>
            <person name="Barry K."/>
            <person name="Detter J.C."/>
            <person name="Glavina del Rio T."/>
            <person name="Hammon N."/>
            <person name="Israni S."/>
            <person name="Pitluck S."/>
            <person name="Chain P."/>
            <person name="Malfatti S."/>
            <person name="Shin M."/>
            <person name="Vergez L."/>
            <person name="Schmutz J."/>
            <person name="Larimer F."/>
            <person name="Land M."/>
            <person name="Hauser L."/>
            <person name="Kyrpides N."/>
            <person name="Kim E."/>
            <person name="Smith K.S."/>
            <person name="Ingram-Smith C."/>
            <person name="Richardson P."/>
        </authorList>
    </citation>
    <scope>NUCLEOTIDE SEQUENCE [LARGE SCALE GENOMIC DNA]</scope>
    <source>
        <strain>DSM 6194 / JCM 14653 / NBRC 101360 / PT</strain>
    </source>
</reference>
<feature type="chain" id="PRO_1000022427" description="Phenylalanine--tRNA ligase beta subunit">
    <location>
        <begin position="1"/>
        <end position="539"/>
    </location>
</feature>
<feature type="domain" description="B5" evidence="1">
    <location>
        <begin position="271"/>
        <end position="347"/>
    </location>
</feature>
<feature type="binding site" evidence="1">
    <location>
        <position position="325"/>
    </location>
    <ligand>
        <name>Mg(2+)</name>
        <dbReference type="ChEBI" id="CHEBI:18420"/>
        <note>shared with alpha subunit</note>
    </ligand>
</feature>
<feature type="binding site" evidence="1">
    <location>
        <position position="331"/>
    </location>
    <ligand>
        <name>Mg(2+)</name>
        <dbReference type="ChEBI" id="CHEBI:18420"/>
        <note>shared with alpha subunit</note>
    </ligand>
</feature>
<feature type="binding site" evidence="1">
    <location>
        <position position="334"/>
    </location>
    <ligand>
        <name>Mg(2+)</name>
        <dbReference type="ChEBI" id="CHEBI:18420"/>
        <note>shared with alpha subunit</note>
    </ligand>
</feature>
<feature type="binding site" evidence="1">
    <location>
        <position position="335"/>
    </location>
    <ligand>
        <name>Mg(2+)</name>
        <dbReference type="ChEBI" id="CHEBI:18420"/>
        <note>shared with alpha subunit</note>
    </ligand>
</feature>
<proteinExistence type="inferred from homology"/>
<accession>A0B993</accession>
<organism>
    <name type="scientific">Methanothrix thermoacetophila (strain DSM 6194 / JCM 14653 / NBRC 101360 / PT)</name>
    <name type="common">Methanosaeta thermophila</name>
    <dbReference type="NCBI Taxonomy" id="349307"/>
    <lineage>
        <taxon>Archaea</taxon>
        <taxon>Methanobacteriati</taxon>
        <taxon>Methanobacteriota</taxon>
        <taxon>Stenosarchaea group</taxon>
        <taxon>Methanomicrobia</taxon>
        <taxon>Methanotrichales</taxon>
        <taxon>Methanotrichaceae</taxon>
        <taxon>Methanothrix</taxon>
    </lineage>
</organism>
<evidence type="ECO:0000255" key="1">
    <source>
        <dbReference type="HAMAP-Rule" id="MF_00284"/>
    </source>
</evidence>
<gene>
    <name evidence="1" type="primary">pheT</name>
    <name type="ordered locus">Mthe_1495</name>
</gene>
<sequence>MPVVRLYYEDLEEMVGASRELIIERLPMMGADIGKSPEADYIDVEFFPDRPDLYSAEGVARALQGFLGIRPGLPEYQVHTGSVEMRVDESVKSVRPIIGCAVVRGLRFTDPFIESLMSLQEDLHWGLGRNRRKVAIGVHDISRVRPPFRYIAEDPDKRRFVPLDFDESMSMREILERHPKGVAYRHILDGFERFPLIVDADDNVLSFPPVINGELTRVREDTTDLFIDVTGTDPVVYRALNIVVTALAERGGRIEGVRMISPDKEWISPDLSPARWTVTTSEANSLIGFNLSAEELAECLRRMRFGARHLDNDSVEVLVPAYRADIMHTWDIIEDAAKSYGYENLKAEMPRTLTIGRPHPMEELKDEVRDLMVGLGYLEVMPFTLTNEKVHFEMMRRSAGECTRVMHPISELHTIIRTAVLPGLMEILSLNQHHALPQRLFAVGDVVIDGRTKCHLSAVSIHSGAGFAEISSLVSAIMRELRISAEVVESSDGAFIPGRGADLMLNGARIGCFGEIHPEVISAFGLEHPVVGMELELSL</sequence>